<comment type="similarity">
    <text evidence="1">Belongs to the bacterial ribosomal protein bL28 family.</text>
</comment>
<evidence type="ECO:0000255" key="1">
    <source>
        <dbReference type="HAMAP-Rule" id="MF_00373"/>
    </source>
</evidence>
<evidence type="ECO:0000305" key="2"/>
<reference key="1">
    <citation type="submission" date="2008-07" db="EMBL/GenBank/DDBJ databases">
        <title>Complete sequence of Geobacter bemidjiensis BEM.</title>
        <authorList>
            <consortium name="US DOE Joint Genome Institute"/>
            <person name="Lucas S."/>
            <person name="Copeland A."/>
            <person name="Lapidus A."/>
            <person name="Glavina del Rio T."/>
            <person name="Dalin E."/>
            <person name="Tice H."/>
            <person name="Bruce D."/>
            <person name="Goodwin L."/>
            <person name="Pitluck S."/>
            <person name="Kiss H."/>
            <person name="Brettin T."/>
            <person name="Detter J.C."/>
            <person name="Han C."/>
            <person name="Kuske C.R."/>
            <person name="Schmutz J."/>
            <person name="Larimer F."/>
            <person name="Land M."/>
            <person name="Hauser L."/>
            <person name="Kyrpides N."/>
            <person name="Lykidis A."/>
            <person name="Lovley D."/>
            <person name="Richardson P."/>
        </authorList>
    </citation>
    <scope>NUCLEOTIDE SEQUENCE [LARGE SCALE GENOMIC DNA]</scope>
    <source>
        <strain>ATCC BAA-1014 / DSM 16622 / JCM 12645 / Bem</strain>
    </source>
</reference>
<proteinExistence type="inferred from homology"/>
<name>RL28_CITBB</name>
<feature type="chain" id="PRO_1000121639" description="Large ribosomal subunit protein bL28">
    <location>
        <begin position="1"/>
        <end position="63"/>
    </location>
</feature>
<sequence>MSRICEICGKGPSFGNNVSHANNKTSKIWRPNLQKIKAVKNGTVRSIKVCTRCIRSGHVTKAL</sequence>
<organism>
    <name type="scientific">Citrifermentans bemidjiense (strain ATCC BAA-1014 / DSM 16622 / JCM 12645 / Bem)</name>
    <name type="common">Geobacter bemidjiensis</name>
    <dbReference type="NCBI Taxonomy" id="404380"/>
    <lineage>
        <taxon>Bacteria</taxon>
        <taxon>Pseudomonadati</taxon>
        <taxon>Thermodesulfobacteriota</taxon>
        <taxon>Desulfuromonadia</taxon>
        <taxon>Geobacterales</taxon>
        <taxon>Geobacteraceae</taxon>
        <taxon>Citrifermentans</taxon>
    </lineage>
</organism>
<gene>
    <name evidence="1" type="primary">rpmB</name>
    <name type="ordered locus">Gbem_3209</name>
</gene>
<keyword id="KW-1185">Reference proteome</keyword>
<keyword id="KW-0687">Ribonucleoprotein</keyword>
<keyword id="KW-0689">Ribosomal protein</keyword>
<dbReference type="EMBL" id="CP001124">
    <property type="protein sequence ID" value="ACH40208.1"/>
    <property type="molecule type" value="Genomic_DNA"/>
</dbReference>
<dbReference type="RefSeq" id="WP_012531640.1">
    <property type="nucleotide sequence ID" value="NC_011146.1"/>
</dbReference>
<dbReference type="SMR" id="B5E9N4"/>
<dbReference type="STRING" id="404380.Gbem_3209"/>
<dbReference type="KEGG" id="gbm:Gbem_3209"/>
<dbReference type="eggNOG" id="COG0227">
    <property type="taxonomic scope" value="Bacteria"/>
</dbReference>
<dbReference type="HOGENOM" id="CLU_064548_7_0_7"/>
<dbReference type="OrthoDB" id="9805609at2"/>
<dbReference type="Proteomes" id="UP000008825">
    <property type="component" value="Chromosome"/>
</dbReference>
<dbReference type="GO" id="GO:1990904">
    <property type="term" value="C:ribonucleoprotein complex"/>
    <property type="evidence" value="ECO:0007669"/>
    <property type="project" value="UniProtKB-KW"/>
</dbReference>
<dbReference type="GO" id="GO:0005840">
    <property type="term" value="C:ribosome"/>
    <property type="evidence" value="ECO:0007669"/>
    <property type="project" value="UniProtKB-KW"/>
</dbReference>
<dbReference type="GO" id="GO:0003735">
    <property type="term" value="F:structural constituent of ribosome"/>
    <property type="evidence" value="ECO:0007669"/>
    <property type="project" value="InterPro"/>
</dbReference>
<dbReference type="GO" id="GO:0006412">
    <property type="term" value="P:translation"/>
    <property type="evidence" value="ECO:0007669"/>
    <property type="project" value="UniProtKB-UniRule"/>
</dbReference>
<dbReference type="Gene3D" id="2.20.150.30">
    <property type="match status" value="1"/>
</dbReference>
<dbReference type="Gene3D" id="2.30.170.40">
    <property type="entry name" value="Ribosomal protein L28/L24"/>
    <property type="match status" value="1"/>
</dbReference>
<dbReference type="HAMAP" id="MF_00373">
    <property type="entry name" value="Ribosomal_bL28"/>
    <property type="match status" value="1"/>
</dbReference>
<dbReference type="InterPro" id="IPR050096">
    <property type="entry name" value="Bacterial_rp_bL28"/>
</dbReference>
<dbReference type="InterPro" id="IPR026569">
    <property type="entry name" value="Ribosomal_bL28"/>
</dbReference>
<dbReference type="InterPro" id="IPR034704">
    <property type="entry name" value="Ribosomal_bL28/bL31-like_sf"/>
</dbReference>
<dbReference type="InterPro" id="IPR001383">
    <property type="entry name" value="Ribosomal_bL28_bact-type"/>
</dbReference>
<dbReference type="InterPro" id="IPR037147">
    <property type="entry name" value="Ribosomal_bL28_sf"/>
</dbReference>
<dbReference type="NCBIfam" id="TIGR00009">
    <property type="entry name" value="L28"/>
    <property type="match status" value="1"/>
</dbReference>
<dbReference type="PANTHER" id="PTHR39080">
    <property type="entry name" value="50S RIBOSOMAL PROTEIN L28"/>
    <property type="match status" value="1"/>
</dbReference>
<dbReference type="PANTHER" id="PTHR39080:SF1">
    <property type="entry name" value="LARGE RIBOSOMAL SUBUNIT PROTEIN BL28A"/>
    <property type="match status" value="1"/>
</dbReference>
<dbReference type="Pfam" id="PF00830">
    <property type="entry name" value="Ribosomal_L28"/>
    <property type="match status" value="1"/>
</dbReference>
<dbReference type="SUPFAM" id="SSF143800">
    <property type="entry name" value="L28p-like"/>
    <property type="match status" value="1"/>
</dbReference>
<protein>
    <recommendedName>
        <fullName evidence="1">Large ribosomal subunit protein bL28</fullName>
    </recommendedName>
    <alternativeName>
        <fullName evidence="2">50S ribosomal protein L28</fullName>
    </alternativeName>
</protein>
<accession>B5E9N4</accession>